<keyword id="KW-0997">Cell inner membrane</keyword>
<keyword id="KW-1003">Cell membrane</keyword>
<keyword id="KW-0472">Membrane</keyword>
<keyword id="KW-1185">Reference proteome</keyword>
<keyword id="KW-0812">Transmembrane</keyword>
<keyword id="KW-1133">Transmembrane helix</keyword>
<keyword id="KW-0813">Transport</keyword>
<proteinExistence type="inferred from homology"/>
<evidence type="ECO:0000250" key="1">
    <source>
        <dbReference type="UniProtKB" id="P75798"/>
    </source>
</evidence>
<evidence type="ECO:0000255" key="2"/>
<evidence type="ECO:0000255" key="3">
    <source>
        <dbReference type="PROSITE-ProRule" id="PRU00441"/>
    </source>
</evidence>
<evidence type="ECO:0000305" key="4"/>
<name>GSIC_SALTY</name>
<feature type="chain" id="PRO_0000279996" description="Glutathione transport system permease protein GsiC">
    <location>
        <begin position="1"/>
        <end position="306"/>
    </location>
</feature>
<feature type="topological domain" description="Cytoplasmic" evidence="2">
    <location>
        <begin position="1"/>
        <end position="8"/>
    </location>
</feature>
<feature type="transmembrane region" description="Helical" evidence="3">
    <location>
        <begin position="9"/>
        <end position="29"/>
    </location>
</feature>
<feature type="topological domain" description="Periplasmic" evidence="2">
    <location>
        <begin position="30"/>
        <end position="102"/>
    </location>
</feature>
<feature type="transmembrane region" description="Helical" evidence="3">
    <location>
        <begin position="103"/>
        <end position="123"/>
    </location>
</feature>
<feature type="topological domain" description="Cytoplasmic" evidence="2">
    <location>
        <begin position="124"/>
        <end position="134"/>
    </location>
</feature>
<feature type="transmembrane region" description="Helical" evidence="3">
    <location>
        <begin position="135"/>
        <end position="155"/>
    </location>
</feature>
<feature type="topological domain" description="Periplasmic" evidence="2">
    <location>
        <begin position="156"/>
        <end position="168"/>
    </location>
</feature>
<feature type="transmembrane region" description="Helical" evidence="3">
    <location>
        <begin position="169"/>
        <end position="189"/>
    </location>
</feature>
<feature type="topological domain" description="Cytoplasmic" evidence="2">
    <location>
        <begin position="190"/>
        <end position="228"/>
    </location>
</feature>
<feature type="transmembrane region" description="Helical" evidence="3">
    <location>
        <begin position="229"/>
        <end position="249"/>
    </location>
</feature>
<feature type="topological domain" description="Periplasmic" evidence="2">
    <location>
        <begin position="250"/>
        <end position="278"/>
    </location>
</feature>
<feature type="transmembrane region" description="Helical" evidence="3">
    <location>
        <begin position="279"/>
        <end position="299"/>
    </location>
</feature>
<feature type="topological domain" description="Cytoplasmic" evidence="2">
    <location>
        <begin position="300"/>
        <end position="306"/>
    </location>
</feature>
<feature type="domain" description="ABC transmembrane type-1" evidence="3">
    <location>
        <begin position="95"/>
        <end position="292"/>
    </location>
</feature>
<reference key="1">
    <citation type="journal article" date="2001" name="Nature">
        <title>Complete genome sequence of Salmonella enterica serovar Typhimurium LT2.</title>
        <authorList>
            <person name="McClelland M."/>
            <person name="Sanderson K.E."/>
            <person name="Spieth J."/>
            <person name="Clifton S.W."/>
            <person name="Latreille P."/>
            <person name="Courtney L."/>
            <person name="Porwollik S."/>
            <person name="Ali J."/>
            <person name="Dante M."/>
            <person name="Du F."/>
            <person name="Hou S."/>
            <person name="Layman D."/>
            <person name="Leonard S."/>
            <person name="Nguyen C."/>
            <person name="Scott K."/>
            <person name="Holmes A."/>
            <person name="Grewal N."/>
            <person name="Mulvaney E."/>
            <person name="Ryan E."/>
            <person name="Sun H."/>
            <person name="Florea L."/>
            <person name="Miller W."/>
            <person name="Stoneking T."/>
            <person name="Nhan M."/>
            <person name="Waterston R."/>
            <person name="Wilson R.K."/>
        </authorList>
    </citation>
    <scope>NUCLEOTIDE SEQUENCE [LARGE SCALE GENOMIC DNA]</scope>
    <source>
        <strain>LT2 / SGSC1412 / ATCC 700720</strain>
    </source>
</reference>
<sequence length="306" mass="33975">MLNYVLKRLLGLIPTLLIVAVLVFLFVHLLPGDPARLIAGPEADAQVIALVRQQLGLDQPLHVQFWHYITHVLQGDFGTSMVSRRPVSEEIASRFLPTLWLTITSMIWAVLFGMAIGIAAAVWRNRWPDRLGMTLAVTGISFPAFALGMLLMQIFSVDLGWLPTVGADSWQHYILPSLTLGAAVASVMARFTRSSFVDVLSEDYMRTARAKGVSETWVVLKHGLRNAMIPVVTMMGLQFGFLLGGSIVVEKVFNWPGLGRLLVDSVDMRDYPVIQAEVLLFSLEFILINLVVDVLYAAINPAIRYK</sequence>
<dbReference type="EMBL" id="AE006468">
    <property type="protein sequence ID" value="AAL19786.1"/>
    <property type="molecule type" value="Genomic_DNA"/>
</dbReference>
<dbReference type="RefSeq" id="WP_000936064.1">
    <property type="nucleotide sequence ID" value="NC_003197.2"/>
</dbReference>
<dbReference type="SMR" id="Q8ZQM2"/>
<dbReference type="STRING" id="99287.STM0850"/>
<dbReference type="PaxDb" id="99287-STM0850"/>
<dbReference type="KEGG" id="stm:STM0850"/>
<dbReference type="PATRIC" id="fig|99287.12.peg.887"/>
<dbReference type="HOGENOM" id="CLU_036879_0_0_6"/>
<dbReference type="OMA" id="WLGLMEQ"/>
<dbReference type="PhylomeDB" id="Q8ZQM2"/>
<dbReference type="BioCyc" id="SENT99287:STM0850-MONOMER"/>
<dbReference type="Proteomes" id="UP000001014">
    <property type="component" value="Chromosome"/>
</dbReference>
<dbReference type="GO" id="GO:0005886">
    <property type="term" value="C:plasma membrane"/>
    <property type="evidence" value="ECO:0007669"/>
    <property type="project" value="UniProtKB-SubCell"/>
</dbReference>
<dbReference type="GO" id="GO:0055085">
    <property type="term" value="P:transmembrane transport"/>
    <property type="evidence" value="ECO:0007669"/>
    <property type="project" value="InterPro"/>
</dbReference>
<dbReference type="CDD" id="cd06261">
    <property type="entry name" value="TM_PBP2"/>
    <property type="match status" value="1"/>
</dbReference>
<dbReference type="FunFam" id="1.10.3720.10:FF:000024">
    <property type="entry name" value="Glutathione ABC transporter permease GsiC"/>
    <property type="match status" value="1"/>
</dbReference>
<dbReference type="Gene3D" id="1.10.3720.10">
    <property type="entry name" value="MetI-like"/>
    <property type="match status" value="1"/>
</dbReference>
<dbReference type="InterPro" id="IPR045621">
    <property type="entry name" value="BPD_transp_1_N"/>
</dbReference>
<dbReference type="InterPro" id="IPR000515">
    <property type="entry name" value="MetI-like"/>
</dbReference>
<dbReference type="InterPro" id="IPR035906">
    <property type="entry name" value="MetI-like_sf"/>
</dbReference>
<dbReference type="NCBIfam" id="NF011661">
    <property type="entry name" value="PRK15081.1"/>
    <property type="match status" value="1"/>
</dbReference>
<dbReference type="PANTHER" id="PTHR43163">
    <property type="entry name" value="DIPEPTIDE TRANSPORT SYSTEM PERMEASE PROTEIN DPPB-RELATED"/>
    <property type="match status" value="1"/>
</dbReference>
<dbReference type="PANTHER" id="PTHR43163:SF5">
    <property type="entry name" value="GLUTATHIONE TRANSPORT SYSTEM PERMEASE PROTEIN GSIC"/>
    <property type="match status" value="1"/>
</dbReference>
<dbReference type="Pfam" id="PF00528">
    <property type="entry name" value="BPD_transp_1"/>
    <property type="match status" value="1"/>
</dbReference>
<dbReference type="Pfam" id="PF19300">
    <property type="entry name" value="BPD_transp_1_N"/>
    <property type="match status" value="1"/>
</dbReference>
<dbReference type="SUPFAM" id="SSF161098">
    <property type="entry name" value="MetI-like"/>
    <property type="match status" value="1"/>
</dbReference>
<dbReference type="PROSITE" id="PS50928">
    <property type="entry name" value="ABC_TM1"/>
    <property type="match status" value="1"/>
</dbReference>
<gene>
    <name evidence="1" type="primary">gsiC</name>
    <name type="ordered locus">STM0850</name>
</gene>
<accession>Q8ZQM2</accession>
<comment type="function">
    <text evidence="1">Part of the ABC transporter complex GsiABCD involved in glutathione import. Probably responsible for the translocation of the substrate across the membrane.</text>
</comment>
<comment type="subunit">
    <text evidence="1">The complex is composed of two ATP-binding proteins (GsiA), two transmembrane proteins (GsiC and GsiD) and a solute-binding protein (GsiB).</text>
</comment>
<comment type="subcellular location">
    <subcellularLocation>
        <location evidence="1">Cell inner membrane</location>
        <topology evidence="2">Multi-pass membrane protein</topology>
    </subcellularLocation>
</comment>
<comment type="similarity">
    <text evidence="4">Belongs to the binding-protein-dependent transport system permease family.</text>
</comment>
<organism>
    <name type="scientific">Salmonella typhimurium (strain LT2 / SGSC1412 / ATCC 700720)</name>
    <dbReference type="NCBI Taxonomy" id="99287"/>
    <lineage>
        <taxon>Bacteria</taxon>
        <taxon>Pseudomonadati</taxon>
        <taxon>Pseudomonadota</taxon>
        <taxon>Gammaproteobacteria</taxon>
        <taxon>Enterobacterales</taxon>
        <taxon>Enterobacteriaceae</taxon>
        <taxon>Salmonella</taxon>
    </lineage>
</organism>
<protein>
    <recommendedName>
        <fullName evidence="1">Glutathione transport system permease protein GsiC</fullName>
    </recommendedName>
</protein>